<reference key="1">
    <citation type="journal article" date="2002" name="Nature">
        <title>The genome sequence of Schizosaccharomyces pombe.</title>
        <authorList>
            <person name="Wood V."/>
            <person name="Gwilliam R."/>
            <person name="Rajandream M.A."/>
            <person name="Lyne M.H."/>
            <person name="Lyne R."/>
            <person name="Stewart A."/>
            <person name="Sgouros J.G."/>
            <person name="Peat N."/>
            <person name="Hayles J."/>
            <person name="Baker S.G."/>
            <person name="Basham D."/>
            <person name="Bowman S."/>
            <person name="Brooks K."/>
            <person name="Brown D."/>
            <person name="Brown S."/>
            <person name="Chillingworth T."/>
            <person name="Churcher C.M."/>
            <person name="Collins M."/>
            <person name="Connor R."/>
            <person name="Cronin A."/>
            <person name="Davis P."/>
            <person name="Feltwell T."/>
            <person name="Fraser A."/>
            <person name="Gentles S."/>
            <person name="Goble A."/>
            <person name="Hamlin N."/>
            <person name="Harris D.E."/>
            <person name="Hidalgo J."/>
            <person name="Hodgson G."/>
            <person name="Holroyd S."/>
            <person name="Hornsby T."/>
            <person name="Howarth S."/>
            <person name="Huckle E.J."/>
            <person name="Hunt S."/>
            <person name="Jagels K."/>
            <person name="James K.D."/>
            <person name="Jones L."/>
            <person name="Jones M."/>
            <person name="Leather S."/>
            <person name="McDonald S."/>
            <person name="McLean J."/>
            <person name="Mooney P."/>
            <person name="Moule S."/>
            <person name="Mungall K.L."/>
            <person name="Murphy L.D."/>
            <person name="Niblett D."/>
            <person name="Odell C."/>
            <person name="Oliver K."/>
            <person name="O'Neil S."/>
            <person name="Pearson D."/>
            <person name="Quail M.A."/>
            <person name="Rabbinowitsch E."/>
            <person name="Rutherford K.M."/>
            <person name="Rutter S."/>
            <person name="Saunders D."/>
            <person name="Seeger K."/>
            <person name="Sharp S."/>
            <person name="Skelton J."/>
            <person name="Simmonds M.N."/>
            <person name="Squares R."/>
            <person name="Squares S."/>
            <person name="Stevens K."/>
            <person name="Taylor K."/>
            <person name="Taylor R.G."/>
            <person name="Tivey A."/>
            <person name="Walsh S.V."/>
            <person name="Warren T."/>
            <person name="Whitehead S."/>
            <person name="Woodward J.R."/>
            <person name="Volckaert G."/>
            <person name="Aert R."/>
            <person name="Robben J."/>
            <person name="Grymonprez B."/>
            <person name="Weltjens I."/>
            <person name="Vanstreels E."/>
            <person name="Rieger M."/>
            <person name="Schaefer M."/>
            <person name="Mueller-Auer S."/>
            <person name="Gabel C."/>
            <person name="Fuchs M."/>
            <person name="Duesterhoeft A."/>
            <person name="Fritzc C."/>
            <person name="Holzer E."/>
            <person name="Moestl D."/>
            <person name="Hilbert H."/>
            <person name="Borzym K."/>
            <person name="Langer I."/>
            <person name="Beck A."/>
            <person name="Lehrach H."/>
            <person name="Reinhardt R."/>
            <person name="Pohl T.M."/>
            <person name="Eger P."/>
            <person name="Zimmermann W."/>
            <person name="Wedler H."/>
            <person name="Wambutt R."/>
            <person name="Purnelle B."/>
            <person name="Goffeau A."/>
            <person name="Cadieu E."/>
            <person name="Dreano S."/>
            <person name="Gloux S."/>
            <person name="Lelaure V."/>
            <person name="Mottier S."/>
            <person name="Galibert F."/>
            <person name="Aves S.J."/>
            <person name="Xiang Z."/>
            <person name="Hunt C."/>
            <person name="Moore K."/>
            <person name="Hurst S.M."/>
            <person name="Lucas M."/>
            <person name="Rochet M."/>
            <person name="Gaillardin C."/>
            <person name="Tallada V.A."/>
            <person name="Garzon A."/>
            <person name="Thode G."/>
            <person name="Daga R.R."/>
            <person name="Cruzado L."/>
            <person name="Jimenez J."/>
            <person name="Sanchez M."/>
            <person name="del Rey F."/>
            <person name="Benito J."/>
            <person name="Dominguez A."/>
            <person name="Revuelta J.L."/>
            <person name="Moreno S."/>
            <person name="Armstrong J."/>
            <person name="Forsburg S.L."/>
            <person name="Cerutti L."/>
            <person name="Lowe T."/>
            <person name="McCombie W.R."/>
            <person name="Paulsen I."/>
            <person name="Potashkin J."/>
            <person name="Shpakovski G.V."/>
            <person name="Ussery D."/>
            <person name="Barrell B.G."/>
            <person name="Nurse P."/>
        </authorList>
    </citation>
    <scope>NUCLEOTIDE SEQUENCE [LARGE SCALE GENOMIC DNA]</scope>
    <source>
        <strain>972 / ATCC 24843</strain>
    </source>
</reference>
<evidence type="ECO:0000250" key="1"/>
<evidence type="ECO:0000255" key="2"/>
<evidence type="ECO:0000305" key="3"/>
<accession>Q9P771</accession>
<sequence>MASSYLSLAARLSQCWISPWSLCCLYILMQFFLFTKDLNTKIGDFVNDEQATCNYIQEKVDILLDSPSLIANAAVRVAKDGIQSTVKIILSGISDSLIAAENVFIFFIEFSYGTYLCLIQLAIDGILDAVADVGEEIGTAVNDTLHAIADEIEDTVSSLNEVFQSAEDSLEKVASWLGEDINLPNVSIPEIQSLRNFTLSSSYDTEFEKLKAGVNFDSAINATKAAISKPFSSARNLILEKVSNYSFDTSMVSSPNKTHVVVCSTDDLTAISSFILSSIYKIRKVVIISLLIIIAGLFLISSIYEIWKWCRIRHKAFLLDEHIRSNKFEDTRDLISYIESPISWNLKYFISALPLPCFLSVQLRWFITYIFHPPAAMILFISCTSFISGILQLVLLNNIREDGSVISALAQNSFHKVESALANVSVAWANSTNQIILKNQENINNNMFGSIHNTTLSLNSTLNTFMNELNSSMTSAFGDTFLASTVQNVMNCLLYRKIENFEEVLTWVYNKSHIELPLLPTDILSKSIDNQTIYSSLYSSLNSSNSTVSFSGIFDRVEKSVISELNFSFLFFLLWLLICAFGLIGVLSSWLKSLFLSLLDLVIPNPKENITLPVQSLAFPVTKSCRPPPIPPRESHVYDFQNFQYEEDDCIDYKRSLGLISLSSDLAIDIPISPAIISDIQFNSITTESEETTYLLKEKQDRY</sequence>
<feature type="chain" id="PRO_0000337289" description="Plasma membrane fusion protein prm1">
    <location>
        <begin position="1"/>
        <end position="703"/>
    </location>
</feature>
<feature type="topological domain" description="Extracellular" evidence="1">
    <location>
        <begin position="1"/>
        <end position="14"/>
    </location>
</feature>
<feature type="transmembrane region" description="Helical" evidence="2">
    <location>
        <begin position="15"/>
        <end position="35"/>
    </location>
</feature>
<feature type="topological domain" description="Cytoplasmic" evidence="1">
    <location>
        <begin position="36"/>
        <end position="102"/>
    </location>
</feature>
<feature type="transmembrane region" description="Helical" evidence="2">
    <location>
        <begin position="103"/>
        <end position="123"/>
    </location>
</feature>
<feature type="topological domain" description="Extracellular" evidence="1">
    <location>
        <begin position="124"/>
        <end position="285"/>
    </location>
</feature>
<feature type="transmembrane region" description="Helical" evidence="2">
    <location>
        <begin position="286"/>
        <end position="306"/>
    </location>
</feature>
<feature type="topological domain" description="Cytoplasmic" evidence="1">
    <location>
        <begin position="307"/>
        <end position="375"/>
    </location>
</feature>
<feature type="transmembrane region" description="Helical" evidence="2">
    <location>
        <begin position="376"/>
        <end position="396"/>
    </location>
</feature>
<feature type="topological domain" description="Extracellular" evidence="1">
    <location>
        <begin position="397"/>
        <end position="566"/>
    </location>
</feature>
<feature type="transmembrane region" description="Helical" evidence="2">
    <location>
        <begin position="567"/>
        <end position="587"/>
    </location>
</feature>
<feature type="topological domain" description="Cytoplasmic" evidence="1">
    <location>
        <begin position="588"/>
        <end position="703"/>
    </location>
</feature>
<feature type="glycosylation site" description="N-linked (GlcNAc...) asparagine" evidence="2">
    <location>
        <position position="142"/>
    </location>
</feature>
<feature type="glycosylation site" description="N-linked (GlcNAc...) asparagine" evidence="2">
    <location>
        <position position="185"/>
    </location>
</feature>
<feature type="glycosylation site" description="N-linked (GlcNAc...) asparagine" evidence="2">
    <location>
        <position position="196"/>
    </location>
</feature>
<feature type="glycosylation site" description="N-linked (GlcNAc...) asparagine" evidence="2">
    <location>
        <position position="221"/>
    </location>
</feature>
<feature type="glycosylation site" description="N-linked (GlcNAc...) asparagine" evidence="2">
    <location>
        <position position="244"/>
    </location>
</feature>
<feature type="glycosylation site" description="N-linked (GlcNAc...) asparagine" evidence="2">
    <location>
        <position position="256"/>
    </location>
</feature>
<feature type="glycosylation site" description="N-linked (GlcNAc...) asparagine" evidence="2">
    <location>
        <position position="423"/>
    </location>
</feature>
<feature type="glycosylation site" description="N-linked (GlcNAc...) asparagine" evidence="2">
    <location>
        <position position="430"/>
    </location>
</feature>
<feature type="glycosylation site" description="N-linked (GlcNAc...) asparagine" evidence="2">
    <location>
        <position position="453"/>
    </location>
</feature>
<feature type="glycosylation site" description="N-linked (GlcNAc...) asparagine" evidence="2">
    <location>
        <position position="459"/>
    </location>
</feature>
<feature type="glycosylation site" description="N-linked (GlcNAc...) asparagine" evidence="2">
    <location>
        <position position="470"/>
    </location>
</feature>
<feature type="glycosylation site" description="N-linked (GlcNAc...) asparagine" evidence="2">
    <location>
        <position position="510"/>
    </location>
</feature>
<feature type="glycosylation site" description="N-linked (GlcNAc...) asparagine" evidence="2">
    <location>
        <position position="530"/>
    </location>
</feature>
<feature type="glycosylation site" description="N-linked (GlcNAc...) asparagine" evidence="2">
    <location>
        <position position="542"/>
    </location>
</feature>
<feature type="glycosylation site" description="N-linked (GlcNAc...) asparagine" evidence="2">
    <location>
        <position position="545"/>
    </location>
</feature>
<feature type="glycosylation site" description="N-linked (GlcNAc...) asparagine" evidence="2">
    <location>
        <position position="566"/>
    </location>
</feature>
<organism>
    <name type="scientific">Schizosaccharomyces pombe (strain 972 / ATCC 24843)</name>
    <name type="common">Fission yeast</name>
    <dbReference type="NCBI Taxonomy" id="284812"/>
    <lineage>
        <taxon>Eukaryota</taxon>
        <taxon>Fungi</taxon>
        <taxon>Dikarya</taxon>
        <taxon>Ascomycota</taxon>
        <taxon>Taphrinomycotina</taxon>
        <taxon>Schizosaccharomycetes</taxon>
        <taxon>Schizosaccharomycetales</taxon>
        <taxon>Schizosaccharomycetaceae</taxon>
        <taxon>Schizosaccharomyces</taxon>
    </lineage>
</organism>
<protein>
    <recommendedName>
        <fullName>Plasma membrane fusion protein prm1</fullName>
    </recommendedName>
</protein>
<gene>
    <name type="primary">prm1</name>
    <name type="ORF">SPAP7G5.03</name>
</gene>
<name>PRM1_SCHPO</name>
<comment type="function">
    <text evidence="1">Involved in cell fusion during mating by stabilizing the plasma membrane fusion event.</text>
</comment>
<comment type="subcellular location">
    <subcellularLocation>
        <location evidence="1">Cell membrane</location>
        <topology evidence="1">Multi-pass membrane protein</topology>
    </subcellularLocation>
</comment>
<comment type="similarity">
    <text evidence="3">Belongs to the PRM1 family.</text>
</comment>
<proteinExistence type="inferred from homology"/>
<keyword id="KW-1003">Cell membrane</keyword>
<keyword id="KW-0184">Conjugation</keyword>
<keyword id="KW-0325">Glycoprotein</keyword>
<keyword id="KW-0472">Membrane</keyword>
<keyword id="KW-1185">Reference proteome</keyword>
<keyword id="KW-0812">Transmembrane</keyword>
<keyword id="KW-1133">Transmembrane helix</keyword>
<dbReference type="EMBL" id="CU329670">
    <property type="protein sequence ID" value="CAB88270.1"/>
    <property type="molecule type" value="Genomic_DNA"/>
</dbReference>
<dbReference type="RefSeq" id="NP_594313.1">
    <property type="nucleotide sequence ID" value="NM_001019736.2"/>
</dbReference>
<dbReference type="SMR" id="Q9P771"/>
<dbReference type="BioGRID" id="279248">
    <property type="interactions" value="3"/>
</dbReference>
<dbReference type="FunCoup" id="Q9P771">
    <property type="interactions" value="5"/>
</dbReference>
<dbReference type="STRING" id="284812.Q9P771"/>
<dbReference type="TCDB" id="9.B.63.1.2">
    <property type="family name" value="the yeast pheromone-induced plasma membrane mating cell fusion protein (prm1) family"/>
</dbReference>
<dbReference type="GlyCosmos" id="Q9P771">
    <property type="glycosylation" value="16 sites, No reported glycans"/>
</dbReference>
<dbReference type="iPTMnet" id="Q9P771"/>
<dbReference type="PaxDb" id="4896-SPAP7G5.03.1"/>
<dbReference type="EnsemblFungi" id="SPAP7G5.03.1">
    <property type="protein sequence ID" value="SPAP7G5.03.1:pep"/>
    <property type="gene ID" value="SPAP7G5.03"/>
</dbReference>
<dbReference type="GeneID" id="2542800"/>
<dbReference type="KEGG" id="spo:2542800"/>
<dbReference type="PomBase" id="SPAP7G5.03">
    <property type="gene designation" value="prm1"/>
</dbReference>
<dbReference type="VEuPathDB" id="FungiDB:SPAP7G5.03"/>
<dbReference type="eggNOG" id="ENOG502QRP5">
    <property type="taxonomic scope" value="Eukaryota"/>
</dbReference>
<dbReference type="HOGENOM" id="CLU_010191_1_0_1"/>
<dbReference type="InParanoid" id="Q9P771"/>
<dbReference type="OMA" id="NVFGWVN"/>
<dbReference type="PhylomeDB" id="Q9P771"/>
<dbReference type="PRO" id="PR:Q9P771"/>
<dbReference type="Proteomes" id="UP000002485">
    <property type="component" value="Chromosome I"/>
</dbReference>
<dbReference type="GO" id="GO:0005737">
    <property type="term" value="C:cytoplasm"/>
    <property type="evidence" value="ECO:0007005"/>
    <property type="project" value="PomBase"/>
</dbReference>
<dbReference type="GO" id="GO:0043332">
    <property type="term" value="C:mating projection tip"/>
    <property type="evidence" value="ECO:0000314"/>
    <property type="project" value="PomBase"/>
</dbReference>
<dbReference type="GO" id="GO:0005886">
    <property type="term" value="C:plasma membrane"/>
    <property type="evidence" value="ECO:0000266"/>
    <property type="project" value="PomBase"/>
</dbReference>
<dbReference type="GO" id="GO:0032220">
    <property type="term" value="P:plasma membrane fusion involved in cytogamy"/>
    <property type="evidence" value="ECO:0000315"/>
    <property type="project" value="PomBase"/>
</dbReference>
<dbReference type="GO" id="GO:0097036">
    <property type="term" value="P:regulation of plasma membrane sterol distribution"/>
    <property type="evidence" value="ECO:0000315"/>
    <property type="project" value="PomBase"/>
</dbReference>
<dbReference type="InterPro" id="IPR026777">
    <property type="entry name" value="PRM1"/>
</dbReference>
<dbReference type="PANTHER" id="PTHR31030">
    <property type="entry name" value="PLASMA MEMBRANE FUSION PROTEIN PRM1"/>
    <property type="match status" value="1"/>
</dbReference>
<dbReference type="PANTHER" id="PTHR31030:SF1">
    <property type="entry name" value="PLASMA MEMBRANE FUSION PROTEIN PRM1"/>
    <property type="match status" value="1"/>
</dbReference>